<proteinExistence type="inferred from homology"/>
<gene>
    <name evidence="2" type="primary">erg26</name>
    <name type="ORF">SPBC3F6.02c</name>
</gene>
<name>ERG26_SCHPO</name>
<feature type="chain" id="PRO_0000357024" description="Sterol-4-alpha-carboxylate 3-dehydrogenase erg26, decarboxylating">
    <location>
        <begin position="1"/>
        <end position="340"/>
    </location>
</feature>
<feature type="active site" description="Proton acceptor" evidence="1">
    <location>
        <position position="144"/>
    </location>
</feature>
<feature type="binding site" evidence="1">
    <location>
        <position position="148"/>
    </location>
    <ligand>
        <name>NAD(+)</name>
        <dbReference type="ChEBI" id="CHEBI:57540"/>
    </ligand>
</feature>
<sequence length="340" mass="38318">MPMNSVLVIGSGFLGGHIIRQLCERENLRIAAFDLFENEKLLHELHGQFTMYTGDLTKQGDIERVFEEFHPRVVIHTASPVHNLARDIYFEVNVDGTANIIKACQKFNVDALVYTSSAGVVFNGADLINVDESQPIPEVHMDAYNESKALAEKQVLEASSESLKTAALRVAGLFGPGDRQLVPGMLSVLKNGQTKFQLGDNLNLFDFTYIENAAYAHLLAMDNLLSSNPTANGQVFFITNGQVIYFWDFARAIWAHAGHVPPYIIKFPRPVGMLLATAAEWVCYFLKKEPGFTRFRVQFSCANRYFNIQKAEDVLKYHPIVDLEEGIRRTLAWMDTEKKH</sequence>
<keyword id="KW-0256">Endoplasmic reticulum</keyword>
<keyword id="KW-0444">Lipid biosynthesis</keyword>
<keyword id="KW-0443">Lipid metabolism</keyword>
<keyword id="KW-0472">Membrane</keyword>
<keyword id="KW-0520">NAD</keyword>
<keyword id="KW-0560">Oxidoreductase</keyword>
<keyword id="KW-1185">Reference proteome</keyword>
<keyword id="KW-0752">Steroid biosynthesis</keyword>
<keyword id="KW-0753">Steroid metabolism</keyword>
<keyword id="KW-0756">Sterol biosynthesis</keyword>
<keyword id="KW-1207">Sterol metabolism</keyword>
<comment type="function">
    <text evidence="2 6 7">Sterol-4-alpha-carboxylate 3-dehydrogenase; part of the third module of ergosterol biosynthesis pathway that includes by the late steps of the pathway (By similarity). Erg26 is a catalytic component of the C-4 demethylation complex that catalyzes the oxidative decarboxylation that results in a reduction of the 3-beta-hydroxy group at the C-3 carbon to an oxo group (By similarity). The third module or late pathway involves the ergosterol synthesis itself through consecutive reactions that mainly occur in the endoplasmic reticulum (ER) membrane. Firstly, the squalene synthase erg9 catalyzes the condensation of 2 farnesyl pyrophosphate moieties to form squalene, which is the precursor of all steroids. Secondly, squalene is converted into lanosterol by the consecutive action of the squalene epoxidase erg1 and the lanosterol synthase erg7. The lanosterol 14-alpha-demethylase erg11/cyp1 catalyzes C14-demethylation of lanosterol to produce 4,4'-dimethyl cholesta-8,14,24-triene-3-beta-ol. In the next steps, a complex process involving various demethylation, reduction and desaturation reactions catalyzed by the C-14 reductase erg24 and the C-4 demethylation complex erg25-erg26-erg27 leads to the production of zymosterol. Erg28 likely functions in the C-4 demethylation complex reaction by tethering erg26 and Erg27 to the endoplasmic reticulum or to facilitate interaction between these proteins. Then, the sterol 24-C-methyltransferase erg6 catalyzes the methyl transfer from S-adenosyl-methionine to the C-24 of zymosterol to form fecosterol. The C-8 sterol isomerase erg2 catalyzes the reaction which results in unsaturation at C-7 in the B ring of sterols and thus converts fecosterol to episterol. The sterol-C5-desaturases erg31 and erg32 then catalyze the introduction of a C-5 double bond in the B ring to produce 5-dehydroepisterol. The C-22 sterol desaturase erg5 further converts 5-dehydroepisterol into ergosta-5,7,22,24(28)-tetraen-3beta-ol by forming the C-22(23) double bond in the sterol side chain. Finally, ergosta-5,7,22,24(28)-tetraen-3beta-ol is substrate of the C-24(28) sterol reductase erg4 to produce ergosterol (Probable) (PubMed:18310029). In the genus Schizosaccharomyces, a second route exists between lanosterol and fecosterol, via the methylation of lanosterol to eburicol by erg6, followed by C14-demethylation by erg11/cyp1 and C4-demethylation by the demethylation complex erg25-erg26-erg27 (Probable) (PubMed:8586261).</text>
</comment>
<comment type="catalytic activity">
    <reaction evidence="2">
        <text>4beta-methylzymosterol-4alpha-carboxylate + NADP(+) = 3-dehydro-4-methylzymosterol + CO2 + NADPH</text>
        <dbReference type="Rhea" id="RHEA:33447"/>
        <dbReference type="ChEBI" id="CHEBI:16526"/>
        <dbReference type="ChEBI" id="CHEBI:50593"/>
        <dbReference type="ChEBI" id="CHEBI:57783"/>
        <dbReference type="ChEBI" id="CHEBI:58349"/>
        <dbReference type="ChEBI" id="CHEBI:64925"/>
        <dbReference type="EC" id="1.1.1.170"/>
    </reaction>
    <physiologicalReaction direction="left-to-right" evidence="2">
        <dbReference type="Rhea" id="RHEA:33448"/>
    </physiologicalReaction>
</comment>
<comment type="pathway">
    <text evidence="2">Steroid biosynthesis; zymosterol biosynthesis; zymosterol from lanosterol: step 4/6.</text>
</comment>
<comment type="pathway">
    <text evidence="2">Steroid metabolism; ergosterol biosynthesis.</text>
</comment>
<comment type="subunit">
    <text evidence="2">Heterotetramer of erg25, erg26, erg27 and erg28 (By similarity). Erg28 acts as a scaffold to tether erg27 and other 4,4-demethylation-related enzymes, forming a demethylation enzyme complex, in the endoplasmic reticulum (By similarity).</text>
</comment>
<comment type="subcellular location">
    <subcellularLocation>
        <location evidence="3">Endoplasmic reticulum membrane</location>
        <topology evidence="3">Peripheral membrane protein</topology>
    </subcellularLocation>
</comment>
<comment type="miscellaneous">
    <text evidence="4">In Aspergillus, the biosynthesis pathway of the sterol precursors leading to the prevalent sterol ergosterol differs from yeast. The ringsystem of lanosterol in S.cerevisiae is firstly demethylised in three enzymatic steps leading to the intermediate zymosterol and secondly a methyl group is added to zymosterol by the sterol 24-C-methyltransferase to form fecosterol. In Aspergillus, lanosterol is firstly transmethylated by the sterol 24-C-methyltransferase leading to the intermediate eburicol and secondly demethylated in three steps to form fecosterol. In the genus Schizosaccharomyces, 2 routes exist from lanosterol to erposterol: the classical one via zymosterol and the second one via the formation of eburicol followed by demethylation.</text>
</comment>
<comment type="similarity">
    <text evidence="5">Belongs to the 3-beta-HSD family.</text>
</comment>
<accession>O43050</accession>
<evidence type="ECO:0000250" key="1"/>
<evidence type="ECO:0000250" key="2">
    <source>
        <dbReference type="UniProtKB" id="P53199"/>
    </source>
</evidence>
<evidence type="ECO:0000269" key="3">
    <source>
    </source>
</evidence>
<evidence type="ECO:0000269" key="4">
    <source>
    </source>
</evidence>
<evidence type="ECO:0000305" key="5"/>
<evidence type="ECO:0000305" key="6">
    <source>
    </source>
</evidence>
<evidence type="ECO:0000305" key="7">
    <source>
    </source>
</evidence>
<dbReference type="EC" id="1.1.1.170" evidence="2"/>
<dbReference type="EMBL" id="CU329671">
    <property type="protein sequence ID" value="CAA17691.1"/>
    <property type="molecule type" value="Genomic_DNA"/>
</dbReference>
<dbReference type="PIR" id="T40392">
    <property type="entry name" value="T40392"/>
</dbReference>
<dbReference type="RefSeq" id="NP_596741.1">
    <property type="nucleotide sequence ID" value="NM_001022667.2"/>
</dbReference>
<dbReference type="SMR" id="O43050"/>
<dbReference type="BioGRID" id="277160">
    <property type="interactions" value="4"/>
</dbReference>
<dbReference type="FunCoup" id="O43050">
    <property type="interactions" value="172"/>
</dbReference>
<dbReference type="STRING" id="284812.O43050"/>
<dbReference type="iPTMnet" id="O43050"/>
<dbReference type="PaxDb" id="4896-SPBC3F6.02c.1"/>
<dbReference type="EnsemblFungi" id="SPBC3F6.02c.1">
    <property type="protein sequence ID" value="SPBC3F6.02c.1:pep"/>
    <property type="gene ID" value="SPBC3F6.02c"/>
</dbReference>
<dbReference type="GeneID" id="2540634"/>
<dbReference type="KEGG" id="spo:2540634"/>
<dbReference type="PomBase" id="SPBC3F6.02c">
    <property type="gene designation" value="erg26"/>
</dbReference>
<dbReference type="VEuPathDB" id="FungiDB:SPBC3F6.02c"/>
<dbReference type="eggNOG" id="KOG1430">
    <property type="taxonomic scope" value="Eukaryota"/>
</dbReference>
<dbReference type="HOGENOM" id="CLU_007383_6_8_1"/>
<dbReference type="InParanoid" id="O43050"/>
<dbReference type="OMA" id="LAILMEM"/>
<dbReference type="PhylomeDB" id="O43050"/>
<dbReference type="Reactome" id="R-SPO-191273">
    <property type="pathway name" value="Cholesterol biosynthesis"/>
</dbReference>
<dbReference type="UniPathway" id="UPA00768"/>
<dbReference type="UniPathway" id="UPA00770">
    <property type="reaction ID" value="UER00757"/>
</dbReference>
<dbReference type="PRO" id="PR:O43050"/>
<dbReference type="Proteomes" id="UP000002485">
    <property type="component" value="Chromosome II"/>
</dbReference>
<dbReference type="GO" id="GO:0005783">
    <property type="term" value="C:endoplasmic reticulum"/>
    <property type="evidence" value="ECO:0007005"/>
    <property type="project" value="PomBase"/>
</dbReference>
<dbReference type="GO" id="GO:0005789">
    <property type="term" value="C:endoplasmic reticulum membrane"/>
    <property type="evidence" value="ECO:0007669"/>
    <property type="project" value="UniProtKB-SubCell"/>
</dbReference>
<dbReference type="GO" id="GO:0005794">
    <property type="term" value="C:Golgi apparatus"/>
    <property type="evidence" value="ECO:0007005"/>
    <property type="project" value="PomBase"/>
</dbReference>
<dbReference type="GO" id="GO:0000252">
    <property type="term" value="F:3-beta-hydroxysteroid dehydrogenase [NAD(P)+]/C4-decarboxylase activity"/>
    <property type="evidence" value="ECO:0000266"/>
    <property type="project" value="PomBase"/>
</dbReference>
<dbReference type="GO" id="GO:0006696">
    <property type="term" value="P:ergosterol biosynthetic process"/>
    <property type="evidence" value="ECO:0000318"/>
    <property type="project" value="GO_Central"/>
</dbReference>
<dbReference type="CDD" id="cd09813">
    <property type="entry name" value="3b-HSD-NSDHL-like_SDR_e"/>
    <property type="match status" value="1"/>
</dbReference>
<dbReference type="FunFam" id="3.40.50.720:FF:000346">
    <property type="entry name" value="C-3 sterol dehydrogenase/C-4 decarboxylase"/>
    <property type="match status" value="1"/>
</dbReference>
<dbReference type="Gene3D" id="3.40.50.720">
    <property type="entry name" value="NAD(P)-binding Rossmann-like Domain"/>
    <property type="match status" value="1"/>
</dbReference>
<dbReference type="InterPro" id="IPR002225">
    <property type="entry name" value="3Beta_OHSteriod_DH/Estase"/>
</dbReference>
<dbReference type="InterPro" id="IPR050177">
    <property type="entry name" value="Lipid_A_modif_metabolic_enz"/>
</dbReference>
<dbReference type="InterPro" id="IPR036291">
    <property type="entry name" value="NAD(P)-bd_dom_sf"/>
</dbReference>
<dbReference type="PANTHER" id="PTHR43245">
    <property type="entry name" value="BIFUNCTIONAL POLYMYXIN RESISTANCE PROTEIN ARNA"/>
    <property type="match status" value="1"/>
</dbReference>
<dbReference type="PANTHER" id="PTHR43245:SF51">
    <property type="entry name" value="SHORT CHAIN DEHYDROGENASE_REDUCTASE FAMILY 42E, MEMBER 2"/>
    <property type="match status" value="1"/>
</dbReference>
<dbReference type="Pfam" id="PF01073">
    <property type="entry name" value="3Beta_HSD"/>
    <property type="match status" value="1"/>
</dbReference>
<dbReference type="SUPFAM" id="SSF51735">
    <property type="entry name" value="NAD(P)-binding Rossmann-fold domains"/>
    <property type="match status" value="1"/>
</dbReference>
<reference key="1">
    <citation type="journal article" date="2002" name="Nature">
        <title>The genome sequence of Schizosaccharomyces pombe.</title>
        <authorList>
            <person name="Wood V."/>
            <person name="Gwilliam R."/>
            <person name="Rajandream M.A."/>
            <person name="Lyne M.H."/>
            <person name="Lyne R."/>
            <person name="Stewart A."/>
            <person name="Sgouros J.G."/>
            <person name="Peat N."/>
            <person name="Hayles J."/>
            <person name="Baker S.G."/>
            <person name="Basham D."/>
            <person name="Bowman S."/>
            <person name="Brooks K."/>
            <person name="Brown D."/>
            <person name="Brown S."/>
            <person name="Chillingworth T."/>
            <person name="Churcher C.M."/>
            <person name="Collins M."/>
            <person name="Connor R."/>
            <person name="Cronin A."/>
            <person name="Davis P."/>
            <person name="Feltwell T."/>
            <person name="Fraser A."/>
            <person name="Gentles S."/>
            <person name="Goble A."/>
            <person name="Hamlin N."/>
            <person name="Harris D.E."/>
            <person name="Hidalgo J."/>
            <person name="Hodgson G."/>
            <person name="Holroyd S."/>
            <person name="Hornsby T."/>
            <person name="Howarth S."/>
            <person name="Huckle E.J."/>
            <person name="Hunt S."/>
            <person name="Jagels K."/>
            <person name="James K.D."/>
            <person name="Jones L."/>
            <person name="Jones M."/>
            <person name="Leather S."/>
            <person name="McDonald S."/>
            <person name="McLean J."/>
            <person name="Mooney P."/>
            <person name="Moule S."/>
            <person name="Mungall K.L."/>
            <person name="Murphy L.D."/>
            <person name="Niblett D."/>
            <person name="Odell C."/>
            <person name="Oliver K."/>
            <person name="O'Neil S."/>
            <person name="Pearson D."/>
            <person name="Quail M.A."/>
            <person name="Rabbinowitsch E."/>
            <person name="Rutherford K.M."/>
            <person name="Rutter S."/>
            <person name="Saunders D."/>
            <person name="Seeger K."/>
            <person name="Sharp S."/>
            <person name="Skelton J."/>
            <person name="Simmonds M.N."/>
            <person name="Squares R."/>
            <person name="Squares S."/>
            <person name="Stevens K."/>
            <person name="Taylor K."/>
            <person name="Taylor R.G."/>
            <person name="Tivey A."/>
            <person name="Walsh S.V."/>
            <person name="Warren T."/>
            <person name="Whitehead S."/>
            <person name="Woodward J.R."/>
            <person name="Volckaert G."/>
            <person name="Aert R."/>
            <person name="Robben J."/>
            <person name="Grymonprez B."/>
            <person name="Weltjens I."/>
            <person name="Vanstreels E."/>
            <person name="Rieger M."/>
            <person name="Schaefer M."/>
            <person name="Mueller-Auer S."/>
            <person name="Gabel C."/>
            <person name="Fuchs M."/>
            <person name="Duesterhoeft A."/>
            <person name="Fritzc C."/>
            <person name="Holzer E."/>
            <person name="Moestl D."/>
            <person name="Hilbert H."/>
            <person name="Borzym K."/>
            <person name="Langer I."/>
            <person name="Beck A."/>
            <person name="Lehrach H."/>
            <person name="Reinhardt R."/>
            <person name="Pohl T.M."/>
            <person name="Eger P."/>
            <person name="Zimmermann W."/>
            <person name="Wedler H."/>
            <person name="Wambutt R."/>
            <person name="Purnelle B."/>
            <person name="Goffeau A."/>
            <person name="Cadieu E."/>
            <person name="Dreano S."/>
            <person name="Gloux S."/>
            <person name="Lelaure V."/>
            <person name="Mottier S."/>
            <person name="Galibert F."/>
            <person name="Aves S.J."/>
            <person name="Xiang Z."/>
            <person name="Hunt C."/>
            <person name="Moore K."/>
            <person name="Hurst S.M."/>
            <person name="Lucas M."/>
            <person name="Rochet M."/>
            <person name="Gaillardin C."/>
            <person name="Tallada V.A."/>
            <person name="Garzon A."/>
            <person name="Thode G."/>
            <person name="Daga R.R."/>
            <person name="Cruzado L."/>
            <person name="Jimenez J."/>
            <person name="Sanchez M."/>
            <person name="del Rey F."/>
            <person name="Benito J."/>
            <person name="Dominguez A."/>
            <person name="Revuelta J.L."/>
            <person name="Moreno S."/>
            <person name="Armstrong J."/>
            <person name="Forsburg S.L."/>
            <person name="Cerutti L."/>
            <person name="Lowe T."/>
            <person name="McCombie W.R."/>
            <person name="Paulsen I."/>
            <person name="Potashkin J."/>
            <person name="Shpakovski G.V."/>
            <person name="Ussery D."/>
            <person name="Barrell B.G."/>
            <person name="Nurse P."/>
        </authorList>
    </citation>
    <scope>NUCLEOTIDE SEQUENCE [LARGE SCALE GENOMIC DNA]</scope>
    <source>
        <strain>972 / ATCC 24843</strain>
    </source>
</reference>
<reference key="2">
    <citation type="journal article" date="1995" name="FEMS Microbiol. Lett.">
        <title>Identification of 24-methylene-24,25-dihydrolanosterol as a precursor of ergosterol in the yeasts Schizosaccharomyces pombe and Schizosaccharomyces octosporus.</title>
        <authorList>
            <person name="Harmouch N."/>
            <person name="Coulon J."/>
            <person name="Bonaly R."/>
        </authorList>
    </citation>
    <scope>FUNCTION</scope>
</reference>
<reference key="3">
    <citation type="journal article" date="2006" name="Nat. Biotechnol.">
        <title>ORFeome cloning and global analysis of protein localization in the fission yeast Schizosaccharomyces pombe.</title>
        <authorList>
            <person name="Matsuyama A."/>
            <person name="Arai R."/>
            <person name="Yashiroda Y."/>
            <person name="Shirai A."/>
            <person name="Kamata A."/>
            <person name="Sekido S."/>
            <person name="Kobayashi Y."/>
            <person name="Hashimoto A."/>
            <person name="Hamamoto M."/>
            <person name="Hiraoka Y."/>
            <person name="Horinouchi S."/>
            <person name="Yoshida M."/>
        </authorList>
    </citation>
    <scope>SUBCELLULAR LOCATION [LARGE SCALE ANALYSIS]</scope>
</reference>
<reference key="4">
    <citation type="journal article" date="2008" name="Microbiology">
        <title>Multiple functions of ergosterol in the fission yeast Schizosaccharomyces pombe.</title>
        <authorList>
            <person name="Iwaki T."/>
            <person name="Iefuji H."/>
            <person name="Hiraga Y."/>
            <person name="Hosomi A."/>
            <person name="Morita T."/>
            <person name="Giga-Hama Y."/>
            <person name="Takegawa K."/>
        </authorList>
    </citation>
    <scope>FUNCTION</scope>
</reference>
<protein>
    <recommendedName>
        <fullName evidence="2">Sterol-4-alpha-carboxylate 3-dehydrogenase erg26, decarboxylating</fullName>
        <ecNumber evidence="2">1.1.1.170</ecNumber>
    </recommendedName>
    <alternativeName>
        <fullName evidence="2">C-3 sterol dehydrogenase erg26</fullName>
    </alternativeName>
    <alternativeName>
        <fullName evidence="2">C-4 decarboxylase erg26</fullName>
    </alternativeName>
    <alternativeName>
        <fullName evidence="2">Ergosterol biosynthetic protein 26</fullName>
    </alternativeName>
</protein>
<organism>
    <name type="scientific">Schizosaccharomyces pombe (strain 972 / ATCC 24843)</name>
    <name type="common">Fission yeast</name>
    <dbReference type="NCBI Taxonomy" id="284812"/>
    <lineage>
        <taxon>Eukaryota</taxon>
        <taxon>Fungi</taxon>
        <taxon>Dikarya</taxon>
        <taxon>Ascomycota</taxon>
        <taxon>Taphrinomycotina</taxon>
        <taxon>Schizosaccharomycetes</taxon>
        <taxon>Schizosaccharomycetales</taxon>
        <taxon>Schizosaccharomycetaceae</taxon>
        <taxon>Schizosaccharomyces</taxon>
    </lineage>
</organism>